<gene>
    <name evidence="1" type="primary">hisB</name>
    <name type="ordered locus">RPB_0405</name>
</gene>
<evidence type="ECO:0000255" key="1">
    <source>
        <dbReference type="HAMAP-Rule" id="MF_00076"/>
    </source>
</evidence>
<organism>
    <name type="scientific">Rhodopseudomonas palustris (strain HaA2)</name>
    <dbReference type="NCBI Taxonomy" id="316058"/>
    <lineage>
        <taxon>Bacteria</taxon>
        <taxon>Pseudomonadati</taxon>
        <taxon>Pseudomonadota</taxon>
        <taxon>Alphaproteobacteria</taxon>
        <taxon>Hyphomicrobiales</taxon>
        <taxon>Nitrobacteraceae</taxon>
        <taxon>Rhodopseudomonas</taxon>
    </lineage>
</organism>
<comment type="catalytic activity">
    <reaction evidence="1">
        <text>D-erythro-1-(imidazol-4-yl)glycerol 3-phosphate = 3-(imidazol-4-yl)-2-oxopropyl phosphate + H2O</text>
        <dbReference type="Rhea" id="RHEA:11040"/>
        <dbReference type="ChEBI" id="CHEBI:15377"/>
        <dbReference type="ChEBI" id="CHEBI:57766"/>
        <dbReference type="ChEBI" id="CHEBI:58278"/>
        <dbReference type="EC" id="4.2.1.19"/>
    </reaction>
</comment>
<comment type="pathway">
    <text evidence="1">Amino-acid biosynthesis; L-histidine biosynthesis; L-histidine from 5-phospho-alpha-D-ribose 1-diphosphate: step 6/9.</text>
</comment>
<comment type="subcellular location">
    <subcellularLocation>
        <location evidence="1">Cytoplasm</location>
    </subcellularLocation>
</comment>
<comment type="similarity">
    <text evidence="1">Belongs to the imidazoleglycerol-phosphate dehydratase family.</text>
</comment>
<accession>Q2J344</accession>
<dbReference type="EC" id="4.2.1.19" evidence="1"/>
<dbReference type="EMBL" id="CP000250">
    <property type="protein sequence ID" value="ABD05116.1"/>
    <property type="molecule type" value="Genomic_DNA"/>
</dbReference>
<dbReference type="RefSeq" id="WP_011439306.1">
    <property type="nucleotide sequence ID" value="NC_007778.1"/>
</dbReference>
<dbReference type="SMR" id="Q2J344"/>
<dbReference type="STRING" id="316058.RPB_0405"/>
<dbReference type="KEGG" id="rpb:RPB_0405"/>
<dbReference type="eggNOG" id="COG0131">
    <property type="taxonomic scope" value="Bacteria"/>
</dbReference>
<dbReference type="HOGENOM" id="CLU_044308_3_0_5"/>
<dbReference type="OrthoDB" id="9813612at2"/>
<dbReference type="UniPathway" id="UPA00031">
    <property type="reaction ID" value="UER00011"/>
</dbReference>
<dbReference type="Proteomes" id="UP000008809">
    <property type="component" value="Chromosome"/>
</dbReference>
<dbReference type="GO" id="GO:0005737">
    <property type="term" value="C:cytoplasm"/>
    <property type="evidence" value="ECO:0007669"/>
    <property type="project" value="UniProtKB-SubCell"/>
</dbReference>
<dbReference type="GO" id="GO:0004424">
    <property type="term" value="F:imidazoleglycerol-phosphate dehydratase activity"/>
    <property type="evidence" value="ECO:0007669"/>
    <property type="project" value="UniProtKB-UniRule"/>
</dbReference>
<dbReference type="GO" id="GO:0000105">
    <property type="term" value="P:L-histidine biosynthetic process"/>
    <property type="evidence" value="ECO:0007669"/>
    <property type="project" value="UniProtKB-UniRule"/>
</dbReference>
<dbReference type="CDD" id="cd07914">
    <property type="entry name" value="IGPD"/>
    <property type="match status" value="1"/>
</dbReference>
<dbReference type="FunFam" id="3.30.230.40:FF:000001">
    <property type="entry name" value="Imidazoleglycerol-phosphate dehydratase HisB"/>
    <property type="match status" value="1"/>
</dbReference>
<dbReference type="FunFam" id="3.30.230.40:FF:000003">
    <property type="entry name" value="Imidazoleglycerol-phosphate dehydratase HisB"/>
    <property type="match status" value="1"/>
</dbReference>
<dbReference type="Gene3D" id="3.30.230.40">
    <property type="entry name" value="Imidazole glycerol phosphate dehydratase, domain 1"/>
    <property type="match status" value="2"/>
</dbReference>
<dbReference type="HAMAP" id="MF_00076">
    <property type="entry name" value="HisB"/>
    <property type="match status" value="1"/>
</dbReference>
<dbReference type="InterPro" id="IPR038494">
    <property type="entry name" value="IGPD_sf"/>
</dbReference>
<dbReference type="InterPro" id="IPR000807">
    <property type="entry name" value="ImidazoleglycerolP_deHydtase"/>
</dbReference>
<dbReference type="InterPro" id="IPR020565">
    <property type="entry name" value="ImidazoleglycerP_deHydtase_CS"/>
</dbReference>
<dbReference type="InterPro" id="IPR020568">
    <property type="entry name" value="Ribosomal_Su5_D2-typ_SF"/>
</dbReference>
<dbReference type="NCBIfam" id="NF002109">
    <property type="entry name" value="PRK00951.1-5"/>
    <property type="match status" value="1"/>
</dbReference>
<dbReference type="NCBIfam" id="NF002111">
    <property type="entry name" value="PRK00951.2-1"/>
    <property type="match status" value="1"/>
</dbReference>
<dbReference type="NCBIfam" id="NF002114">
    <property type="entry name" value="PRK00951.2-4"/>
    <property type="match status" value="1"/>
</dbReference>
<dbReference type="PANTHER" id="PTHR23133:SF2">
    <property type="entry name" value="IMIDAZOLEGLYCEROL-PHOSPHATE DEHYDRATASE"/>
    <property type="match status" value="1"/>
</dbReference>
<dbReference type="PANTHER" id="PTHR23133">
    <property type="entry name" value="IMIDAZOLEGLYCEROL-PHOSPHATE DEHYDRATASE HIS7"/>
    <property type="match status" value="1"/>
</dbReference>
<dbReference type="Pfam" id="PF00475">
    <property type="entry name" value="IGPD"/>
    <property type="match status" value="1"/>
</dbReference>
<dbReference type="SUPFAM" id="SSF54211">
    <property type="entry name" value="Ribosomal protein S5 domain 2-like"/>
    <property type="match status" value="2"/>
</dbReference>
<dbReference type="PROSITE" id="PS00954">
    <property type="entry name" value="IGP_DEHYDRATASE_1"/>
    <property type="match status" value="1"/>
</dbReference>
<dbReference type="PROSITE" id="PS00955">
    <property type="entry name" value="IGP_DEHYDRATASE_2"/>
    <property type="match status" value="1"/>
</dbReference>
<sequence length="197" mass="21376">MRTATIKRKTKETDIEVTVNLDGAGVSNAATGIGFFDHMLDLLAKHSRIDITVKAVGDLHVDFHHTTEDVGIALGQAVRQALGNMAGIIRYASMLMPMDETLTRVVIDVSGRPFLVFKAEFPRDKIGEFDTELVREWFQAFAMNAGVTLHVETLYGENSHHIAESCFKGLARALRAAVAIDPQAAGEVPSTKGQLGG</sequence>
<protein>
    <recommendedName>
        <fullName evidence="1">Imidazoleglycerol-phosphate dehydratase</fullName>
        <shortName evidence="1">IGPD</shortName>
        <ecNumber evidence="1">4.2.1.19</ecNumber>
    </recommendedName>
</protein>
<feature type="chain" id="PRO_1000010341" description="Imidazoleglycerol-phosphate dehydratase">
    <location>
        <begin position="1"/>
        <end position="197"/>
    </location>
</feature>
<reference key="1">
    <citation type="submission" date="2006-01" db="EMBL/GenBank/DDBJ databases">
        <title>Complete sequence of Rhodopseudomonas palustris HaA2.</title>
        <authorList>
            <consortium name="US DOE Joint Genome Institute"/>
            <person name="Copeland A."/>
            <person name="Lucas S."/>
            <person name="Lapidus A."/>
            <person name="Barry K."/>
            <person name="Detter J.C."/>
            <person name="Glavina T."/>
            <person name="Hammon N."/>
            <person name="Israni S."/>
            <person name="Pitluck S."/>
            <person name="Chain P."/>
            <person name="Malfatti S."/>
            <person name="Shin M."/>
            <person name="Vergez L."/>
            <person name="Schmutz J."/>
            <person name="Larimer F."/>
            <person name="Land M."/>
            <person name="Hauser L."/>
            <person name="Pelletier D.A."/>
            <person name="Kyrpides N."/>
            <person name="Anderson I."/>
            <person name="Oda Y."/>
            <person name="Harwood C.S."/>
            <person name="Richardson P."/>
        </authorList>
    </citation>
    <scope>NUCLEOTIDE SEQUENCE [LARGE SCALE GENOMIC DNA]</scope>
    <source>
        <strain>HaA2</strain>
    </source>
</reference>
<proteinExistence type="inferred from homology"/>
<keyword id="KW-0028">Amino-acid biosynthesis</keyword>
<keyword id="KW-0963">Cytoplasm</keyword>
<keyword id="KW-0368">Histidine biosynthesis</keyword>
<keyword id="KW-0456">Lyase</keyword>
<keyword id="KW-1185">Reference proteome</keyword>
<name>HIS7_RHOP2</name>